<dbReference type="EMBL" id="BC116013">
    <property type="protein sequence ID" value="AAI16014.1"/>
    <property type="molecule type" value="mRNA"/>
</dbReference>
<dbReference type="EMBL" id="BT026170">
    <property type="protein sequence ID" value="ABG67009.1"/>
    <property type="molecule type" value="mRNA"/>
</dbReference>
<dbReference type="RefSeq" id="NP_001069078.1">
    <property type="nucleotide sequence ID" value="NM_001075610.1"/>
</dbReference>
<dbReference type="SMR" id="Q1JQD9"/>
<dbReference type="FunCoup" id="Q1JQD9">
    <property type="interactions" value="4845"/>
</dbReference>
<dbReference type="STRING" id="9913.ENSBTAP00000072805"/>
<dbReference type="PaxDb" id="9913-ENSBTAP00000037474"/>
<dbReference type="GeneID" id="513297"/>
<dbReference type="KEGG" id="bta:513297"/>
<dbReference type="CTD" id="83746"/>
<dbReference type="eggNOG" id="KOG3766">
    <property type="taxonomic scope" value="Eukaryota"/>
</dbReference>
<dbReference type="HOGENOM" id="CLU_005352_2_1_1"/>
<dbReference type="InParanoid" id="Q1JQD9"/>
<dbReference type="OrthoDB" id="5800688at2759"/>
<dbReference type="TreeFam" id="TF316498"/>
<dbReference type="Proteomes" id="UP000009136">
    <property type="component" value="Unplaced"/>
</dbReference>
<dbReference type="GO" id="GO:0005634">
    <property type="term" value="C:nucleus"/>
    <property type="evidence" value="ECO:0000318"/>
    <property type="project" value="GO_Central"/>
</dbReference>
<dbReference type="GO" id="GO:0003682">
    <property type="term" value="F:chromatin binding"/>
    <property type="evidence" value="ECO:0000318"/>
    <property type="project" value="GO_Central"/>
</dbReference>
<dbReference type="GO" id="GO:0140005">
    <property type="term" value="F:histone H4K20me2 reader activity"/>
    <property type="evidence" value="ECO:0000250"/>
    <property type="project" value="UniProtKB"/>
</dbReference>
<dbReference type="GO" id="GO:0035064">
    <property type="term" value="F:methylated histone binding"/>
    <property type="evidence" value="ECO:0000318"/>
    <property type="project" value="GO_Central"/>
</dbReference>
<dbReference type="GO" id="GO:0008270">
    <property type="term" value="F:zinc ion binding"/>
    <property type="evidence" value="ECO:0007669"/>
    <property type="project" value="UniProtKB-KW"/>
</dbReference>
<dbReference type="GO" id="GO:0045892">
    <property type="term" value="P:negative regulation of DNA-templated transcription"/>
    <property type="evidence" value="ECO:0000318"/>
    <property type="project" value="GO_Central"/>
</dbReference>
<dbReference type="CDD" id="cd20100">
    <property type="entry name" value="MBT_dSfmbt-like_rpt4"/>
    <property type="match status" value="1"/>
</dbReference>
<dbReference type="CDD" id="cd20121">
    <property type="entry name" value="MBT_L3MBTL2_rpt1"/>
    <property type="match status" value="1"/>
</dbReference>
<dbReference type="CDD" id="cd20124">
    <property type="entry name" value="MBT_L3MBTL2_rpt2"/>
    <property type="match status" value="1"/>
</dbReference>
<dbReference type="CDD" id="cd20127">
    <property type="entry name" value="MBT_L3MBTL2_rpt3"/>
    <property type="match status" value="1"/>
</dbReference>
<dbReference type="FunFam" id="2.30.30.140:FF:000010">
    <property type="entry name" value="MBT domain-containing protein 1 isoform X1"/>
    <property type="match status" value="1"/>
</dbReference>
<dbReference type="FunFam" id="2.30.30.140:FF:000015">
    <property type="entry name" value="MBT domain-containing protein 1 isoform X1"/>
    <property type="match status" value="1"/>
</dbReference>
<dbReference type="FunFam" id="2.30.30.140:FF:000019">
    <property type="entry name" value="MBT domain-containing protein 1 isoform X1"/>
    <property type="match status" value="1"/>
</dbReference>
<dbReference type="FunFam" id="2.30.30.140:FF:000032">
    <property type="entry name" value="MBT domain-containing protein 1 isoform X1"/>
    <property type="match status" value="1"/>
</dbReference>
<dbReference type="FunFam" id="3.30.60.160:FF:000001">
    <property type="entry name" value="MBT domain-containing protein 1 isoform X1"/>
    <property type="match status" value="1"/>
</dbReference>
<dbReference type="Gene3D" id="2.30.30.140">
    <property type="match status" value="4"/>
</dbReference>
<dbReference type="Gene3D" id="3.30.60.160">
    <property type="match status" value="1"/>
</dbReference>
<dbReference type="InterPro" id="IPR004092">
    <property type="entry name" value="Mbt"/>
</dbReference>
<dbReference type="InterPro" id="IPR047356">
    <property type="entry name" value="MBT_L3MBTL2_rpt1"/>
</dbReference>
<dbReference type="InterPro" id="IPR047357">
    <property type="entry name" value="MBT_L3MBTL2_rpt2"/>
</dbReference>
<dbReference type="InterPro" id="IPR050548">
    <property type="entry name" value="PcG_chromatin_remod_factors"/>
</dbReference>
<dbReference type="InterPro" id="IPR012313">
    <property type="entry name" value="Znf_FCS"/>
</dbReference>
<dbReference type="InterPro" id="IPR038603">
    <property type="entry name" value="Znf_FCS_sf"/>
</dbReference>
<dbReference type="PANTHER" id="PTHR12247:SF64">
    <property type="entry name" value="LETHAL(3)MALIGNANT BRAIN TUMOR-LIKE PROTEIN 2"/>
    <property type="match status" value="1"/>
</dbReference>
<dbReference type="PANTHER" id="PTHR12247">
    <property type="entry name" value="POLYCOMB GROUP PROTEIN"/>
    <property type="match status" value="1"/>
</dbReference>
<dbReference type="Pfam" id="PF02820">
    <property type="entry name" value="MBT"/>
    <property type="match status" value="4"/>
</dbReference>
<dbReference type="Pfam" id="PF21319">
    <property type="entry name" value="zf-FCS_1"/>
    <property type="match status" value="1"/>
</dbReference>
<dbReference type="SMART" id="SM00561">
    <property type="entry name" value="MBT"/>
    <property type="match status" value="4"/>
</dbReference>
<dbReference type="SUPFAM" id="SSF63748">
    <property type="entry name" value="Tudor/PWWP/MBT"/>
    <property type="match status" value="4"/>
</dbReference>
<dbReference type="PROSITE" id="PS51079">
    <property type="entry name" value="MBT"/>
    <property type="match status" value="4"/>
</dbReference>
<dbReference type="PROSITE" id="PS51024">
    <property type="entry name" value="ZF_FCS"/>
    <property type="match status" value="1"/>
</dbReference>
<gene>
    <name type="primary">L3MBTL2</name>
</gene>
<sequence length="706" mass="79081">MEKPRGVEETPSSEPMEEEEEDDDLELFGGYDSFRSYNSSAGSESSSYLEESSEAEHEDREAGELPTSPLHLLSPGTPRSLDGSGSEPAVCEMCGIVGTREAFFSKTKRFCSVSCSRSYSSNSKKASILARLQGKPPTKKAKVLHKAAWSAKIGAFLHSQGTGQLADGTPTGQDALVLGFDWGKFLKDHSYKAAPVSCFKHVPLYDQWEDVMKGMKVEVLNSDAVLPSRVYWIASVIQAAGYRVLLRYEGFENDASHDFWCNLGTVDVHPIGWCAINSKILVPPRTIHAKFTDWKGYLMKRLVGSRTLPVDFHIKMVESMKYPFRQGMRLEVVDKSQVSRTRMAVVDTVIGGRLRLLYEDGDSDDDFWCHMWSPLIHPVGWSRRVGHGIKLSERRSDMAHHPTFRKIYCDAVPYLFKKVRAVYTEGGWFEEGMKLEAIDPLNLGNICVATICKVLLDGYLMICVDGGPSTDGSDWFCYHASSHAIFPANFCQKNDIELTPPKGYEAHTFSWEAYLEKTKAKAAPSRLFNMDCPNHGFKVGMKLEAVDLMEPRLICVATVKRVVHRLLSIHFDGWDSEYDQWVDCESPDIYPVGWCELTGYQLQPPVATEPTTPLKAKEATKKKKKQFGKKRKRIPPAKTRPLRQGSKKALLEEDLQAAAKAPSEPAPDEIITVRVKEEHLDVATADKALSPELPVPVENIKQETDD</sequence>
<proteinExistence type="evidence at transcript level"/>
<evidence type="ECO:0000250" key="1"/>
<evidence type="ECO:0000250" key="2">
    <source>
        <dbReference type="UniProtKB" id="Q969R5"/>
    </source>
</evidence>
<evidence type="ECO:0000255" key="3">
    <source>
        <dbReference type="PROSITE-ProRule" id="PRU00367"/>
    </source>
</evidence>
<evidence type="ECO:0000256" key="4">
    <source>
        <dbReference type="SAM" id="MobiDB-lite"/>
    </source>
</evidence>
<evidence type="ECO:0000305" key="5"/>
<organism>
    <name type="scientific">Bos taurus</name>
    <name type="common">Bovine</name>
    <dbReference type="NCBI Taxonomy" id="9913"/>
    <lineage>
        <taxon>Eukaryota</taxon>
        <taxon>Metazoa</taxon>
        <taxon>Chordata</taxon>
        <taxon>Craniata</taxon>
        <taxon>Vertebrata</taxon>
        <taxon>Euteleostomi</taxon>
        <taxon>Mammalia</taxon>
        <taxon>Eutheria</taxon>
        <taxon>Laurasiatheria</taxon>
        <taxon>Artiodactyla</taxon>
        <taxon>Ruminantia</taxon>
        <taxon>Pecora</taxon>
        <taxon>Bovidae</taxon>
        <taxon>Bovinae</taxon>
        <taxon>Bos</taxon>
    </lineage>
</organism>
<keyword id="KW-0156">Chromatin regulator</keyword>
<keyword id="KW-1017">Isopeptide bond</keyword>
<keyword id="KW-0479">Metal-binding</keyword>
<keyword id="KW-0539">Nucleus</keyword>
<keyword id="KW-0597">Phosphoprotein</keyword>
<keyword id="KW-1185">Reference proteome</keyword>
<keyword id="KW-0677">Repeat</keyword>
<keyword id="KW-0804">Transcription</keyword>
<keyword id="KW-0805">Transcription regulation</keyword>
<keyword id="KW-0832">Ubl conjugation</keyword>
<keyword id="KW-0862">Zinc</keyword>
<keyword id="KW-0863">Zinc-finger</keyword>
<accession>Q1JQD9</accession>
<accession>Q0V8P8</accession>
<comment type="function">
    <text evidence="1">Putative Polycomb group (PcG) protein. PcG proteins maintain the transcriptionally repressive state of genes, probably via a modification of chromatin, rendering it heritably changed in its expressibility. Its association with a chromatin-remodeling complex suggests that it may contribute to prevent expression of genes that trigger the cell into mitosis. Binds to monomethylated and dimethylated 'Lys-20' on histone H4. Binds histone H3 peptides that are monomethylated or dimethylated on 'Lys-4', 'Lys-9' or 'Lys-27' (By similarity).</text>
</comment>
<comment type="subunit">
    <text evidence="1">Part of the E2F6.com-1 complex in G0 phase composed of E2F6, MGA, MAX, TFDP1, CBX3, BAT8, EUHMTASE1, RING1, RNF2, MBLR, BAT8 and YAF2.</text>
</comment>
<comment type="subcellular location">
    <subcellularLocation>
        <location evidence="5">Nucleus</location>
    </subcellularLocation>
</comment>
<protein>
    <recommendedName>
        <fullName>Lethal(3)malignant brain tumor-like protein 2</fullName>
        <shortName>L(3)mbt-like protein 2</shortName>
    </recommendedName>
</protein>
<reference key="1">
    <citation type="submission" date="2006-05" db="EMBL/GenBank/DDBJ databases">
        <authorList>
            <consortium name="NIH - Mammalian Gene Collection (MGC) project"/>
        </authorList>
    </citation>
    <scope>NUCLEOTIDE SEQUENCE [LARGE SCALE MRNA]</scope>
    <source>
        <strain>Hereford</strain>
        <tissue>Ascending colon</tissue>
    </source>
</reference>
<reference key="2">
    <citation type="journal article" date="2005" name="BMC Genomics">
        <title>Characterization of 954 bovine full-CDS cDNA sequences.</title>
        <authorList>
            <person name="Harhay G.P."/>
            <person name="Sonstegard T.S."/>
            <person name="Keele J.W."/>
            <person name="Heaton M.P."/>
            <person name="Clawson M.L."/>
            <person name="Snelling W.M."/>
            <person name="Wiedmann R.T."/>
            <person name="Van Tassell C.P."/>
            <person name="Smith T.P.L."/>
        </authorList>
    </citation>
    <scope>NUCLEOTIDE SEQUENCE [LARGE SCALE MRNA] OF 1-619</scope>
</reference>
<name>LMBL2_BOVIN</name>
<feature type="chain" id="PRO_0000346783" description="Lethal(3)malignant brain tumor-like protein 2">
    <location>
        <begin position="1"/>
        <end position="706"/>
    </location>
</feature>
<feature type="repeat" description="MBT 1">
    <location>
        <begin position="180"/>
        <end position="284"/>
    </location>
</feature>
<feature type="repeat" description="MBT 2">
    <location>
        <begin position="292"/>
        <end position="392"/>
    </location>
</feature>
<feature type="repeat" description="MBT 3">
    <location>
        <begin position="398"/>
        <end position="501"/>
    </location>
</feature>
<feature type="repeat" description="MBT 4">
    <location>
        <begin position="509"/>
        <end position="605"/>
    </location>
</feature>
<feature type="zinc finger region" description="FCS-type" evidence="3">
    <location>
        <begin position="82"/>
        <end position="117"/>
    </location>
</feature>
<feature type="region of interest" description="Disordered" evidence="4">
    <location>
        <begin position="1"/>
        <end position="85"/>
    </location>
</feature>
<feature type="region of interest" description="Disordered" evidence="4">
    <location>
        <begin position="606"/>
        <end position="669"/>
    </location>
</feature>
<feature type="region of interest" description="Disordered" evidence="4">
    <location>
        <begin position="685"/>
        <end position="706"/>
    </location>
</feature>
<feature type="compositionally biased region" description="Acidic residues" evidence="4">
    <location>
        <begin position="15"/>
        <end position="26"/>
    </location>
</feature>
<feature type="compositionally biased region" description="Low complexity" evidence="4">
    <location>
        <begin position="39"/>
        <end position="50"/>
    </location>
</feature>
<feature type="compositionally biased region" description="Basic and acidic residues" evidence="4">
    <location>
        <begin position="54"/>
        <end position="63"/>
    </location>
</feature>
<feature type="compositionally biased region" description="Basic residues" evidence="4">
    <location>
        <begin position="620"/>
        <end position="635"/>
    </location>
</feature>
<feature type="binding site" evidence="3">
    <location>
        <position position="91"/>
    </location>
    <ligand>
        <name>Zn(2+)</name>
        <dbReference type="ChEBI" id="CHEBI:29105"/>
    </ligand>
</feature>
<feature type="binding site" evidence="3">
    <location>
        <position position="94"/>
    </location>
    <ligand>
        <name>Zn(2+)</name>
        <dbReference type="ChEBI" id="CHEBI:29105"/>
    </ligand>
</feature>
<feature type="binding site" evidence="3">
    <location>
        <position position="111"/>
    </location>
    <ligand>
        <name>Zn(2+)</name>
        <dbReference type="ChEBI" id="CHEBI:29105"/>
    </ligand>
</feature>
<feature type="binding site" evidence="3">
    <location>
        <position position="115"/>
    </location>
    <ligand>
        <name>Zn(2+)</name>
        <dbReference type="ChEBI" id="CHEBI:29105"/>
    </ligand>
</feature>
<feature type="modified residue" description="Phosphoserine" evidence="2">
    <location>
        <position position="13"/>
    </location>
</feature>
<feature type="modified residue" description="Phosphoserine" evidence="2">
    <location>
        <position position="68"/>
    </location>
</feature>
<feature type="modified residue" description="Phosphothreonine" evidence="2">
    <location>
        <position position="77"/>
    </location>
</feature>
<feature type="modified residue" description="Phosphoserine" evidence="2">
    <location>
        <position position="339"/>
    </location>
</feature>
<feature type="modified residue" description="Phosphoserine" evidence="2">
    <location>
        <position position="690"/>
    </location>
</feature>
<feature type="cross-link" description="Glycyl lysine isopeptide (Lys-Gly) (interchain with G-Cter in SUMO2)" evidence="2">
    <location>
        <position position="406"/>
    </location>
</feature>
<feature type="cross-link" description="Glycyl lysine isopeptide (Lys-Gly) (interchain with G-Cter in SUMO2)" evidence="2">
    <location>
        <position position="648"/>
    </location>
</feature>
<feature type="cross-link" description="Glycyl lysine isopeptide (Lys-Gly) (interchain with G-Cter in SUMO2)" evidence="2">
    <location>
        <position position="660"/>
    </location>
</feature>
<feature type="cross-link" description="Glycyl lysine isopeptide (Lys-Gly) (interchain with G-Cter in SUMO2)" evidence="2">
    <location>
        <position position="676"/>
    </location>
</feature>
<feature type="cross-link" description="Glycyl lysine isopeptide (Lys-Gly) (interchain with G-Cter in SUMO1); alternate" evidence="2">
    <location>
        <position position="701"/>
    </location>
</feature>
<feature type="cross-link" description="Glycyl lysine isopeptide (Lys-Gly) (interchain with G-Cter in SUMO2); alternate" evidence="2">
    <location>
        <position position="701"/>
    </location>
</feature>